<accession>Q4A5S3</accession>
<feature type="chain" id="PRO_0000224776" description="Elongation factor 4">
    <location>
        <begin position="1"/>
        <end position="605"/>
    </location>
</feature>
<feature type="domain" description="tr-type G">
    <location>
        <begin position="4"/>
        <end position="181"/>
    </location>
</feature>
<feature type="binding site" evidence="1">
    <location>
        <begin position="16"/>
        <end position="21"/>
    </location>
    <ligand>
        <name>GTP</name>
        <dbReference type="ChEBI" id="CHEBI:37565"/>
    </ligand>
</feature>
<feature type="binding site" evidence="1">
    <location>
        <begin position="128"/>
        <end position="131"/>
    </location>
    <ligand>
        <name>GTP</name>
        <dbReference type="ChEBI" id="CHEBI:37565"/>
    </ligand>
</feature>
<comment type="function">
    <text evidence="1">Required for accurate and efficient protein synthesis under certain stress conditions. May act as a fidelity factor of the translation reaction, by catalyzing a one-codon backward translocation of tRNAs on improperly translocated ribosomes. Back-translocation proceeds from a post-translocation (POST) complex to a pre-translocation (PRE) complex, thus giving elongation factor G a second chance to translocate the tRNAs correctly. Binds to ribosomes in a GTP-dependent manner.</text>
</comment>
<comment type="catalytic activity">
    <reaction evidence="1">
        <text>GTP + H2O = GDP + phosphate + H(+)</text>
        <dbReference type="Rhea" id="RHEA:19669"/>
        <dbReference type="ChEBI" id="CHEBI:15377"/>
        <dbReference type="ChEBI" id="CHEBI:15378"/>
        <dbReference type="ChEBI" id="CHEBI:37565"/>
        <dbReference type="ChEBI" id="CHEBI:43474"/>
        <dbReference type="ChEBI" id="CHEBI:58189"/>
        <dbReference type="EC" id="3.6.5.n1"/>
    </reaction>
</comment>
<comment type="subcellular location">
    <subcellularLocation>
        <location evidence="1">Cell membrane</location>
        <topology evidence="1">Peripheral membrane protein</topology>
        <orientation evidence="1">Cytoplasmic side</orientation>
    </subcellularLocation>
</comment>
<comment type="similarity">
    <text evidence="1">Belongs to the TRAFAC class translation factor GTPase superfamily. Classic translation factor GTPase family. LepA subfamily.</text>
</comment>
<proteinExistence type="inferred from homology"/>
<keyword id="KW-1003">Cell membrane</keyword>
<keyword id="KW-0342">GTP-binding</keyword>
<keyword id="KW-0378">Hydrolase</keyword>
<keyword id="KW-0472">Membrane</keyword>
<keyword id="KW-0547">Nucleotide-binding</keyword>
<keyword id="KW-0648">Protein biosynthesis</keyword>
<keyword id="KW-1185">Reference proteome</keyword>
<gene>
    <name evidence="1" type="primary">lepA</name>
    <name type="ordered locus">MS53_0489</name>
</gene>
<reference key="1">
    <citation type="journal article" date="2005" name="J. Bacteriol.">
        <title>Swine and poultry pathogens: the complete genome sequences of two strains of Mycoplasma hyopneumoniae and a strain of Mycoplasma synoviae.</title>
        <authorList>
            <person name="Vasconcelos A.T.R."/>
            <person name="Ferreira H.B."/>
            <person name="Bizarro C.V."/>
            <person name="Bonatto S.L."/>
            <person name="Carvalho M.O."/>
            <person name="Pinto P.M."/>
            <person name="Almeida D.F."/>
            <person name="Almeida L.G.P."/>
            <person name="Almeida R."/>
            <person name="Alves-Junior L."/>
            <person name="Assuncao E.N."/>
            <person name="Azevedo V.A.C."/>
            <person name="Bogo M.R."/>
            <person name="Brigido M.M."/>
            <person name="Brocchi M."/>
            <person name="Burity H.A."/>
            <person name="Camargo A.A."/>
            <person name="Camargo S.S."/>
            <person name="Carepo M.S."/>
            <person name="Carraro D.M."/>
            <person name="de Mattos Cascardo J.C."/>
            <person name="Castro L.A."/>
            <person name="Cavalcanti G."/>
            <person name="Chemale G."/>
            <person name="Collevatti R.G."/>
            <person name="Cunha C.W."/>
            <person name="Dallagiovanna B."/>
            <person name="Dambros B.P."/>
            <person name="Dellagostin O.A."/>
            <person name="Falcao C."/>
            <person name="Fantinatti-Garboggini F."/>
            <person name="Felipe M.S.S."/>
            <person name="Fiorentin L."/>
            <person name="Franco G.R."/>
            <person name="Freitas N.S.A."/>
            <person name="Frias D."/>
            <person name="Grangeiro T.B."/>
            <person name="Grisard E.C."/>
            <person name="Guimaraes C.T."/>
            <person name="Hungria M."/>
            <person name="Jardim S.N."/>
            <person name="Krieger M.A."/>
            <person name="Laurino J.P."/>
            <person name="Lima L.F.A."/>
            <person name="Lopes M.I."/>
            <person name="Loreto E.L.S."/>
            <person name="Madeira H.M.F."/>
            <person name="Manfio G.P."/>
            <person name="Maranhao A.Q."/>
            <person name="Martinkovics C.T."/>
            <person name="Medeiros S.R.B."/>
            <person name="Moreira M.A.M."/>
            <person name="Neiva M."/>
            <person name="Ramalho-Neto C.E."/>
            <person name="Nicolas M.F."/>
            <person name="Oliveira S.C."/>
            <person name="Paixao R.F.C."/>
            <person name="Pedrosa F.O."/>
            <person name="Pena S.D.J."/>
            <person name="Pereira M."/>
            <person name="Pereira-Ferrari L."/>
            <person name="Piffer I."/>
            <person name="Pinto L.S."/>
            <person name="Potrich D.P."/>
            <person name="Salim A.C.M."/>
            <person name="Santos F.R."/>
            <person name="Schmitt R."/>
            <person name="Schneider M.P.C."/>
            <person name="Schrank A."/>
            <person name="Schrank I.S."/>
            <person name="Schuck A.F."/>
            <person name="Seuanez H.N."/>
            <person name="Silva D.W."/>
            <person name="Silva R."/>
            <person name="Silva S.C."/>
            <person name="Soares C.M.A."/>
            <person name="Souza K.R.L."/>
            <person name="Souza R.C."/>
            <person name="Staats C.C."/>
            <person name="Steffens M.B.R."/>
            <person name="Teixeira S.M.R."/>
            <person name="Urmenyi T.P."/>
            <person name="Vainstein M.H."/>
            <person name="Zuccherato L.W."/>
            <person name="Simpson A.J.G."/>
            <person name="Zaha A."/>
        </authorList>
    </citation>
    <scope>NUCLEOTIDE SEQUENCE [LARGE SCALE GENOMIC DNA]</scope>
    <source>
        <strain>53</strain>
    </source>
</reference>
<name>LEPA_MYCS5</name>
<sequence>MQKNKIKTFSIIAHIDHGKSTLADRILELTNTVSKRELTNQFLDSMELEKERGISIKLNAVQLKYKDYIFQLIDTPGHVDFTYEVSRSLAASEGALLIVDATQGIQAQTLANVYLAIENKLEIIPVINKVDLPSADVDRVKQEIEDVIGIPTNSAIEVSAKTGFGVDKLLDAIVEYVPSPLDADDLKPLKALIFDSYFDPYRGVVLLIRIKEGKLKVGDKFMFMSRKHDESNTYHVIELGVKNPSETKKEFLESGEVGWVSAAIRDAKEISVGDTITHIDNPAKEALPGYKKIKAVVFTGFYPIDTKDYVQLKESLEKISLSDSSIVWEQETSKALGFGFRVGFLGLLHMEILQERLDREYNVGIIATAPSVEYKIFKTNGEIEFVSNPTMMPDRSTIEKIEEPYIEATVFIPNEYIGNLMELCQSKRGIYISLEALDDKRSKIVYELPLSETILDFFDKMKSYTKGFASFEYELIGYKESDLVKVDILLNGEKVDAFSIIAHKDKAYEHARELCIKLKDEIPRQNFEIPVQATIGGKIIARETIKAYRKDVTAKLYGGDVTRKQKLLKKQKAGKKRMKKIGSIEVPQEAFLNILKTNTDQKNKK</sequence>
<protein>
    <recommendedName>
        <fullName evidence="1">Elongation factor 4</fullName>
        <shortName evidence="1">EF-4</shortName>
        <ecNumber evidence="1">3.6.5.n1</ecNumber>
    </recommendedName>
    <alternativeName>
        <fullName evidence="1">Ribosomal back-translocase LepA</fullName>
    </alternativeName>
</protein>
<dbReference type="EC" id="3.6.5.n1" evidence="1"/>
<dbReference type="EMBL" id="AE017245">
    <property type="protein sequence ID" value="AAZ43898.1"/>
    <property type="molecule type" value="Genomic_DNA"/>
</dbReference>
<dbReference type="RefSeq" id="WP_011283627.1">
    <property type="nucleotide sequence ID" value="NC_007294.1"/>
</dbReference>
<dbReference type="SMR" id="Q4A5S3"/>
<dbReference type="STRING" id="262723.MS53_0489"/>
<dbReference type="KEGG" id="msy:MS53_0489"/>
<dbReference type="eggNOG" id="COG0481">
    <property type="taxonomic scope" value="Bacteria"/>
</dbReference>
<dbReference type="HOGENOM" id="CLU_009995_3_3_14"/>
<dbReference type="OrthoDB" id="9804431at2"/>
<dbReference type="Proteomes" id="UP000000549">
    <property type="component" value="Chromosome"/>
</dbReference>
<dbReference type="GO" id="GO:0005886">
    <property type="term" value="C:plasma membrane"/>
    <property type="evidence" value="ECO:0007669"/>
    <property type="project" value="UniProtKB-SubCell"/>
</dbReference>
<dbReference type="GO" id="GO:0005525">
    <property type="term" value="F:GTP binding"/>
    <property type="evidence" value="ECO:0007669"/>
    <property type="project" value="UniProtKB-UniRule"/>
</dbReference>
<dbReference type="GO" id="GO:0003924">
    <property type="term" value="F:GTPase activity"/>
    <property type="evidence" value="ECO:0007669"/>
    <property type="project" value="UniProtKB-UniRule"/>
</dbReference>
<dbReference type="GO" id="GO:0043022">
    <property type="term" value="F:ribosome binding"/>
    <property type="evidence" value="ECO:0007669"/>
    <property type="project" value="UniProtKB-UniRule"/>
</dbReference>
<dbReference type="GO" id="GO:0003746">
    <property type="term" value="F:translation elongation factor activity"/>
    <property type="evidence" value="ECO:0007669"/>
    <property type="project" value="UniProtKB-UniRule"/>
</dbReference>
<dbReference type="GO" id="GO:0045727">
    <property type="term" value="P:positive regulation of translation"/>
    <property type="evidence" value="ECO:0007669"/>
    <property type="project" value="UniProtKB-UniRule"/>
</dbReference>
<dbReference type="CDD" id="cd03699">
    <property type="entry name" value="EF4_II"/>
    <property type="match status" value="1"/>
</dbReference>
<dbReference type="CDD" id="cd16260">
    <property type="entry name" value="EF4_III"/>
    <property type="match status" value="1"/>
</dbReference>
<dbReference type="CDD" id="cd01890">
    <property type="entry name" value="LepA"/>
    <property type="match status" value="1"/>
</dbReference>
<dbReference type="CDD" id="cd03709">
    <property type="entry name" value="lepA_C"/>
    <property type="match status" value="1"/>
</dbReference>
<dbReference type="FunFam" id="3.40.50.300:FF:000078">
    <property type="entry name" value="Elongation factor 4"/>
    <property type="match status" value="1"/>
</dbReference>
<dbReference type="FunFam" id="2.40.30.10:FF:000015">
    <property type="entry name" value="Translation factor GUF1, mitochondrial"/>
    <property type="match status" value="1"/>
</dbReference>
<dbReference type="FunFam" id="3.30.70.240:FF:000007">
    <property type="entry name" value="Translation factor GUF1, mitochondrial"/>
    <property type="match status" value="1"/>
</dbReference>
<dbReference type="FunFam" id="3.30.70.2570:FF:000001">
    <property type="entry name" value="Translation factor GUF1, mitochondrial"/>
    <property type="match status" value="1"/>
</dbReference>
<dbReference type="FunFam" id="3.30.70.870:FF:000004">
    <property type="entry name" value="Translation factor GUF1, mitochondrial"/>
    <property type="match status" value="1"/>
</dbReference>
<dbReference type="Gene3D" id="3.30.70.240">
    <property type="match status" value="1"/>
</dbReference>
<dbReference type="Gene3D" id="3.30.70.2570">
    <property type="entry name" value="Elongation factor 4, C-terminal domain"/>
    <property type="match status" value="1"/>
</dbReference>
<dbReference type="Gene3D" id="3.30.70.870">
    <property type="entry name" value="Elongation Factor G (Translational Gtpase), domain 3"/>
    <property type="match status" value="1"/>
</dbReference>
<dbReference type="Gene3D" id="3.40.50.300">
    <property type="entry name" value="P-loop containing nucleotide triphosphate hydrolases"/>
    <property type="match status" value="1"/>
</dbReference>
<dbReference type="Gene3D" id="2.40.30.10">
    <property type="entry name" value="Translation factors"/>
    <property type="match status" value="1"/>
</dbReference>
<dbReference type="HAMAP" id="MF_00071">
    <property type="entry name" value="LepA"/>
    <property type="match status" value="1"/>
</dbReference>
<dbReference type="InterPro" id="IPR006297">
    <property type="entry name" value="EF-4"/>
</dbReference>
<dbReference type="InterPro" id="IPR035647">
    <property type="entry name" value="EFG_III/V"/>
</dbReference>
<dbReference type="InterPro" id="IPR000640">
    <property type="entry name" value="EFG_V-like"/>
</dbReference>
<dbReference type="InterPro" id="IPR004161">
    <property type="entry name" value="EFTu-like_2"/>
</dbReference>
<dbReference type="InterPro" id="IPR031157">
    <property type="entry name" value="G_TR_CS"/>
</dbReference>
<dbReference type="InterPro" id="IPR038363">
    <property type="entry name" value="LepA_C_sf"/>
</dbReference>
<dbReference type="InterPro" id="IPR013842">
    <property type="entry name" value="LepA_CTD"/>
</dbReference>
<dbReference type="InterPro" id="IPR035654">
    <property type="entry name" value="LepA_IV"/>
</dbReference>
<dbReference type="InterPro" id="IPR027417">
    <property type="entry name" value="P-loop_NTPase"/>
</dbReference>
<dbReference type="InterPro" id="IPR005225">
    <property type="entry name" value="Small_GTP-bd"/>
</dbReference>
<dbReference type="InterPro" id="IPR000795">
    <property type="entry name" value="T_Tr_GTP-bd_dom"/>
</dbReference>
<dbReference type="InterPro" id="IPR009000">
    <property type="entry name" value="Transl_B-barrel_sf"/>
</dbReference>
<dbReference type="NCBIfam" id="TIGR01393">
    <property type="entry name" value="lepA"/>
    <property type="match status" value="1"/>
</dbReference>
<dbReference type="NCBIfam" id="TIGR00231">
    <property type="entry name" value="small_GTP"/>
    <property type="match status" value="1"/>
</dbReference>
<dbReference type="PANTHER" id="PTHR43512:SF4">
    <property type="entry name" value="TRANSLATION FACTOR GUF1 HOMOLOG, CHLOROPLASTIC"/>
    <property type="match status" value="1"/>
</dbReference>
<dbReference type="PANTHER" id="PTHR43512">
    <property type="entry name" value="TRANSLATION FACTOR GUF1-RELATED"/>
    <property type="match status" value="1"/>
</dbReference>
<dbReference type="Pfam" id="PF00679">
    <property type="entry name" value="EFG_C"/>
    <property type="match status" value="1"/>
</dbReference>
<dbReference type="Pfam" id="PF00009">
    <property type="entry name" value="GTP_EFTU"/>
    <property type="match status" value="1"/>
</dbReference>
<dbReference type="Pfam" id="PF03144">
    <property type="entry name" value="GTP_EFTU_D2"/>
    <property type="match status" value="1"/>
</dbReference>
<dbReference type="Pfam" id="PF06421">
    <property type="entry name" value="LepA_C"/>
    <property type="match status" value="1"/>
</dbReference>
<dbReference type="PRINTS" id="PR00315">
    <property type="entry name" value="ELONGATNFCT"/>
</dbReference>
<dbReference type="SMART" id="SM00838">
    <property type="entry name" value="EFG_C"/>
    <property type="match status" value="1"/>
</dbReference>
<dbReference type="SUPFAM" id="SSF54980">
    <property type="entry name" value="EF-G C-terminal domain-like"/>
    <property type="match status" value="2"/>
</dbReference>
<dbReference type="SUPFAM" id="SSF52540">
    <property type="entry name" value="P-loop containing nucleoside triphosphate hydrolases"/>
    <property type="match status" value="1"/>
</dbReference>
<dbReference type="SUPFAM" id="SSF50447">
    <property type="entry name" value="Translation proteins"/>
    <property type="match status" value="1"/>
</dbReference>
<dbReference type="PROSITE" id="PS00301">
    <property type="entry name" value="G_TR_1"/>
    <property type="match status" value="1"/>
</dbReference>
<dbReference type="PROSITE" id="PS51722">
    <property type="entry name" value="G_TR_2"/>
    <property type="match status" value="1"/>
</dbReference>
<organism>
    <name type="scientific">Mycoplasmopsis synoviae (strain 53)</name>
    <name type="common">Mycoplasma synoviae</name>
    <dbReference type="NCBI Taxonomy" id="262723"/>
    <lineage>
        <taxon>Bacteria</taxon>
        <taxon>Bacillati</taxon>
        <taxon>Mycoplasmatota</taxon>
        <taxon>Mycoplasmoidales</taxon>
        <taxon>Metamycoplasmataceae</taxon>
        <taxon>Mycoplasmopsis</taxon>
    </lineage>
</organism>
<evidence type="ECO:0000255" key="1">
    <source>
        <dbReference type="HAMAP-Rule" id="MF_00071"/>
    </source>
</evidence>